<keyword id="KW-0067">ATP-binding</keyword>
<keyword id="KW-0143">Chaperone</keyword>
<keyword id="KW-0963">Cytoplasm</keyword>
<keyword id="KW-0413">Isomerase</keyword>
<keyword id="KW-0547">Nucleotide-binding</keyword>
<sequence>MAKEIKFSDSARNLLFEGVRQLHDAVKVTMGPKGRNVLIQKSYGAPSITKDGVSVAKEIELSCPVANMGAQLVKEVASKTADAAGDGTTTATVLAYSIFKEGLRNITAGANPIEVKRGMDKAAEAIINELKKSSKKVGGKEEITQVATISANSDHNIGKLIADAMEKVGKDGVITVEEAKGIEDELDVVEGMQFDRGYLSPYFVTNAEKMTAQLDNAYILLTDKKISSMKDILPLLEKTMKEGKPLLIIAEDIEGEALTTLVVNKLRGVLNIAAVKAPGFGDRRKEMLKDIAVLTGGQVISEELGLTLENAEVEFLGKAGRIVIDKDNTTIVDGKGHSHDVKDRVAQIKTQIASTTSDYDKEKLQERLAKLSGGVAVIKVGAASEVEMKEKKDRVDDALSATKAAVEEGIVIGGGAALIRAAQKVHLHLNGDEKVGYEIIMRAIKAPLAQIAINAGYDGGVVVNEVQKHEGHFGFNASNGEYVDMFKEGIIDPLKVERIALQNAVSVSSLLLTTEATVHEIKEEKATPAMPDMGGMGGMGGMGGMM</sequence>
<organism>
    <name type="scientific">Helicobacter acinonychis (strain Sheeba)</name>
    <dbReference type="NCBI Taxonomy" id="382638"/>
    <lineage>
        <taxon>Bacteria</taxon>
        <taxon>Pseudomonadati</taxon>
        <taxon>Campylobacterota</taxon>
        <taxon>Epsilonproteobacteria</taxon>
        <taxon>Campylobacterales</taxon>
        <taxon>Helicobacteraceae</taxon>
        <taxon>Helicobacter</taxon>
    </lineage>
</organism>
<comment type="function">
    <text evidence="1">Together with its co-chaperonin GroES, plays an essential role in assisting protein folding. The GroEL-GroES system forms a nano-cage that allows encapsulation of the non-native substrate proteins and provides a physical environment optimized to promote and accelerate protein folding.</text>
</comment>
<comment type="catalytic activity">
    <reaction evidence="1">
        <text>ATP + H2O + a folded polypeptide = ADP + phosphate + an unfolded polypeptide.</text>
        <dbReference type="EC" id="5.6.1.7"/>
    </reaction>
</comment>
<comment type="subunit">
    <text evidence="1">Forms a cylinder of 14 subunits composed of two heptameric rings stacked back-to-back. Interacts with the co-chaperonin GroES.</text>
</comment>
<comment type="subcellular location">
    <subcellularLocation>
        <location evidence="1">Cytoplasm</location>
    </subcellularLocation>
</comment>
<comment type="similarity">
    <text evidence="1">Belongs to the chaperonin (HSP60) family.</text>
</comment>
<dbReference type="EC" id="5.6.1.7" evidence="1"/>
<dbReference type="EMBL" id="AM260522">
    <property type="protein sequence ID" value="CAK00400.1"/>
    <property type="molecule type" value="Genomic_DNA"/>
</dbReference>
<dbReference type="RefSeq" id="WP_011578483.1">
    <property type="nucleotide sequence ID" value="NC_008229.1"/>
</dbReference>
<dbReference type="SMR" id="Q17VC6"/>
<dbReference type="STRING" id="382638.Hac_1698"/>
<dbReference type="GeneID" id="31758943"/>
<dbReference type="KEGG" id="hac:Hac_1698"/>
<dbReference type="eggNOG" id="COG0459">
    <property type="taxonomic scope" value="Bacteria"/>
</dbReference>
<dbReference type="HOGENOM" id="CLU_016503_3_0_7"/>
<dbReference type="OrthoDB" id="9766614at2"/>
<dbReference type="BioCyc" id="HACI382638:HAC_RS07225-MONOMER"/>
<dbReference type="Proteomes" id="UP000000775">
    <property type="component" value="Chromosome"/>
</dbReference>
<dbReference type="GO" id="GO:0005737">
    <property type="term" value="C:cytoplasm"/>
    <property type="evidence" value="ECO:0007669"/>
    <property type="project" value="UniProtKB-SubCell"/>
</dbReference>
<dbReference type="GO" id="GO:0005524">
    <property type="term" value="F:ATP binding"/>
    <property type="evidence" value="ECO:0007669"/>
    <property type="project" value="UniProtKB-UniRule"/>
</dbReference>
<dbReference type="GO" id="GO:0140662">
    <property type="term" value="F:ATP-dependent protein folding chaperone"/>
    <property type="evidence" value="ECO:0007669"/>
    <property type="project" value="InterPro"/>
</dbReference>
<dbReference type="GO" id="GO:0016853">
    <property type="term" value="F:isomerase activity"/>
    <property type="evidence" value="ECO:0007669"/>
    <property type="project" value="UniProtKB-KW"/>
</dbReference>
<dbReference type="GO" id="GO:0051082">
    <property type="term" value="F:unfolded protein binding"/>
    <property type="evidence" value="ECO:0007669"/>
    <property type="project" value="UniProtKB-UniRule"/>
</dbReference>
<dbReference type="GO" id="GO:0042026">
    <property type="term" value="P:protein refolding"/>
    <property type="evidence" value="ECO:0007669"/>
    <property type="project" value="UniProtKB-UniRule"/>
</dbReference>
<dbReference type="CDD" id="cd03344">
    <property type="entry name" value="GroEL"/>
    <property type="match status" value="1"/>
</dbReference>
<dbReference type="FunFam" id="3.50.7.10:FF:000001">
    <property type="entry name" value="60 kDa chaperonin"/>
    <property type="match status" value="1"/>
</dbReference>
<dbReference type="Gene3D" id="3.50.7.10">
    <property type="entry name" value="GroEL"/>
    <property type="match status" value="1"/>
</dbReference>
<dbReference type="Gene3D" id="1.10.560.10">
    <property type="entry name" value="GroEL-like equatorial domain"/>
    <property type="match status" value="1"/>
</dbReference>
<dbReference type="Gene3D" id="3.30.260.10">
    <property type="entry name" value="TCP-1-like chaperonin intermediate domain"/>
    <property type="match status" value="1"/>
</dbReference>
<dbReference type="HAMAP" id="MF_00600">
    <property type="entry name" value="CH60"/>
    <property type="match status" value="1"/>
</dbReference>
<dbReference type="InterPro" id="IPR018370">
    <property type="entry name" value="Chaperonin_Cpn60_CS"/>
</dbReference>
<dbReference type="InterPro" id="IPR001844">
    <property type="entry name" value="Cpn60/GroEL"/>
</dbReference>
<dbReference type="InterPro" id="IPR002423">
    <property type="entry name" value="Cpn60/GroEL/TCP-1"/>
</dbReference>
<dbReference type="InterPro" id="IPR027409">
    <property type="entry name" value="GroEL-like_apical_dom_sf"/>
</dbReference>
<dbReference type="InterPro" id="IPR027413">
    <property type="entry name" value="GROEL-like_equatorial_sf"/>
</dbReference>
<dbReference type="InterPro" id="IPR027410">
    <property type="entry name" value="TCP-1-like_intermed_sf"/>
</dbReference>
<dbReference type="NCBIfam" id="TIGR02348">
    <property type="entry name" value="GroEL"/>
    <property type="match status" value="1"/>
</dbReference>
<dbReference type="NCBIfam" id="NF000592">
    <property type="entry name" value="PRK00013.1"/>
    <property type="match status" value="1"/>
</dbReference>
<dbReference type="NCBIfam" id="NF009487">
    <property type="entry name" value="PRK12849.1"/>
    <property type="match status" value="1"/>
</dbReference>
<dbReference type="NCBIfam" id="NF009488">
    <property type="entry name" value="PRK12850.1"/>
    <property type="match status" value="1"/>
</dbReference>
<dbReference type="NCBIfam" id="NF009489">
    <property type="entry name" value="PRK12851.1"/>
    <property type="match status" value="1"/>
</dbReference>
<dbReference type="PANTHER" id="PTHR45633">
    <property type="entry name" value="60 KDA HEAT SHOCK PROTEIN, MITOCHONDRIAL"/>
    <property type="match status" value="1"/>
</dbReference>
<dbReference type="Pfam" id="PF00118">
    <property type="entry name" value="Cpn60_TCP1"/>
    <property type="match status" value="1"/>
</dbReference>
<dbReference type="PRINTS" id="PR00298">
    <property type="entry name" value="CHAPERONIN60"/>
</dbReference>
<dbReference type="SUPFAM" id="SSF52029">
    <property type="entry name" value="GroEL apical domain-like"/>
    <property type="match status" value="1"/>
</dbReference>
<dbReference type="SUPFAM" id="SSF48592">
    <property type="entry name" value="GroEL equatorial domain-like"/>
    <property type="match status" value="2"/>
</dbReference>
<dbReference type="PROSITE" id="PS00296">
    <property type="entry name" value="CHAPERONINS_CPN60"/>
    <property type="match status" value="1"/>
</dbReference>
<gene>
    <name evidence="1" type="primary">groEL</name>
    <name evidence="1" type="synonym">groL</name>
    <name type="ordered locus">Hac_1698</name>
</gene>
<feature type="chain" id="PRO_1000025792" description="Chaperonin GroEL">
    <location>
        <begin position="1"/>
        <end position="546"/>
    </location>
</feature>
<feature type="binding site" evidence="1">
    <location>
        <begin position="29"/>
        <end position="32"/>
    </location>
    <ligand>
        <name>ATP</name>
        <dbReference type="ChEBI" id="CHEBI:30616"/>
    </ligand>
</feature>
<feature type="binding site" evidence="1">
    <location>
        <position position="50"/>
    </location>
    <ligand>
        <name>ATP</name>
        <dbReference type="ChEBI" id="CHEBI:30616"/>
    </ligand>
</feature>
<feature type="binding site" evidence="1">
    <location>
        <begin position="86"/>
        <end position="90"/>
    </location>
    <ligand>
        <name>ATP</name>
        <dbReference type="ChEBI" id="CHEBI:30616"/>
    </ligand>
</feature>
<feature type="binding site" evidence="1">
    <location>
        <position position="414"/>
    </location>
    <ligand>
        <name>ATP</name>
        <dbReference type="ChEBI" id="CHEBI:30616"/>
    </ligand>
</feature>
<feature type="binding site" evidence="1">
    <location>
        <position position="492"/>
    </location>
    <ligand>
        <name>ATP</name>
        <dbReference type="ChEBI" id="CHEBI:30616"/>
    </ligand>
</feature>
<accession>Q17VC6</accession>
<protein>
    <recommendedName>
        <fullName evidence="1">Chaperonin GroEL</fullName>
        <ecNumber evidence="1">5.6.1.7</ecNumber>
    </recommendedName>
    <alternativeName>
        <fullName evidence="1">60 kDa chaperonin</fullName>
    </alternativeName>
    <alternativeName>
        <fullName evidence="1">Chaperonin-60</fullName>
        <shortName evidence="1">Cpn60</shortName>
    </alternativeName>
</protein>
<name>CH60_HELAH</name>
<reference key="1">
    <citation type="journal article" date="2006" name="PLoS Genet.">
        <title>Who ate whom? Adaptive Helicobacter genomic changes that accompanied a host jump from early humans to large felines.</title>
        <authorList>
            <person name="Eppinger M."/>
            <person name="Baar C."/>
            <person name="Linz B."/>
            <person name="Raddatz G."/>
            <person name="Lanz C."/>
            <person name="Keller H."/>
            <person name="Morelli G."/>
            <person name="Gressmann H."/>
            <person name="Achtman M."/>
            <person name="Schuster S.C."/>
        </authorList>
    </citation>
    <scope>NUCLEOTIDE SEQUENCE [LARGE SCALE GENOMIC DNA]</scope>
    <source>
        <strain>Sheeba</strain>
    </source>
</reference>
<evidence type="ECO:0000255" key="1">
    <source>
        <dbReference type="HAMAP-Rule" id="MF_00600"/>
    </source>
</evidence>
<proteinExistence type="inferred from homology"/>